<keyword id="KW-0119">Carbohydrate metabolism</keyword>
<keyword id="KW-0963">Cytoplasm</keyword>
<keyword id="KW-0413">Isomerase</keyword>
<proteinExistence type="inferred from homology"/>
<reference key="1">
    <citation type="journal article" date="2008" name="Genome Res.">
        <title>Comparative genome analysis of Salmonella enteritidis PT4 and Salmonella gallinarum 287/91 provides insights into evolutionary and host adaptation pathways.</title>
        <authorList>
            <person name="Thomson N.R."/>
            <person name="Clayton D.J."/>
            <person name="Windhorst D."/>
            <person name="Vernikos G."/>
            <person name="Davidson S."/>
            <person name="Churcher C."/>
            <person name="Quail M.A."/>
            <person name="Stevens M."/>
            <person name="Jones M.A."/>
            <person name="Watson M."/>
            <person name="Barron A."/>
            <person name="Layton A."/>
            <person name="Pickard D."/>
            <person name="Kingsley R.A."/>
            <person name="Bignell A."/>
            <person name="Clark L."/>
            <person name="Harris B."/>
            <person name="Ormond D."/>
            <person name="Abdellah Z."/>
            <person name="Brooks K."/>
            <person name="Cherevach I."/>
            <person name="Chillingworth T."/>
            <person name="Woodward J."/>
            <person name="Norberczak H."/>
            <person name="Lord A."/>
            <person name="Arrowsmith C."/>
            <person name="Jagels K."/>
            <person name="Moule S."/>
            <person name="Mungall K."/>
            <person name="Saunders M."/>
            <person name="Whitehead S."/>
            <person name="Chabalgoity J.A."/>
            <person name="Maskell D."/>
            <person name="Humphreys T."/>
            <person name="Roberts M."/>
            <person name="Barrow P.A."/>
            <person name="Dougan G."/>
            <person name="Parkhill J."/>
        </authorList>
    </citation>
    <scope>NUCLEOTIDE SEQUENCE [LARGE SCALE GENOMIC DNA]</scope>
    <source>
        <strain>P125109</strain>
    </source>
</reference>
<dbReference type="EC" id="5.4.99.62" evidence="1"/>
<dbReference type="EMBL" id="AM933172">
    <property type="protein sequence ID" value="CAR35271.1"/>
    <property type="molecule type" value="Genomic_DNA"/>
</dbReference>
<dbReference type="RefSeq" id="WP_000715944.1">
    <property type="nucleotide sequence ID" value="NC_011294.1"/>
</dbReference>
<dbReference type="SMR" id="B5QVE8"/>
<dbReference type="KEGG" id="set:SEN3695"/>
<dbReference type="HOGENOM" id="CLU_135498_0_0_6"/>
<dbReference type="UniPathway" id="UPA00916">
    <property type="reaction ID" value="UER00888"/>
</dbReference>
<dbReference type="Proteomes" id="UP000000613">
    <property type="component" value="Chromosome"/>
</dbReference>
<dbReference type="GO" id="GO:0005829">
    <property type="term" value="C:cytosol"/>
    <property type="evidence" value="ECO:0007669"/>
    <property type="project" value="TreeGrafter"/>
</dbReference>
<dbReference type="GO" id="GO:0062193">
    <property type="term" value="F:D-ribose pyranase activity"/>
    <property type="evidence" value="ECO:0007669"/>
    <property type="project" value="UniProtKB-EC"/>
</dbReference>
<dbReference type="GO" id="GO:0016872">
    <property type="term" value="F:intramolecular lyase activity"/>
    <property type="evidence" value="ECO:0007669"/>
    <property type="project" value="UniProtKB-UniRule"/>
</dbReference>
<dbReference type="GO" id="GO:0048029">
    <property type="term" value="F:monosaccharide binding"/>
    <property type="evidence" value="ECO:0007669"/>
    <property type="project" value="InterPro"/>
</dbReference>
<dbReference type="GO" id="GO:0019303">
    <property type="term" value="P:D-ribose catabolic process"/>
    <property type="evidence" value="ECO:0007669"/>
    <property type="project" value="UniProtKB-UniRule"/>
</dbReference>
<dbReference type="FunFam" id="3.40.1650.10:FF:000002">
    <property type="entry name" value="D-ribose pyranase"/>
    <property type="match status" value="1"/>
</dbReference>
<dbReference type="Gene3D" id="3.40.1650.10">
    <property type="entry name" value="RbsD-like domain"/>
    <property type="match status" value="1"/>
</dbReference>
<dbReference type="HAMAP" id="MF_01661">
    <property type="entry name" value="D_rib_pyranase"/>
    <property type="match status" value="1"/>
</dbReference>
<dbReference type="InterPro" id="IPR023064">
    <property type="entry name" value="D-ribose_pyranase"/>
</dbReference>
<dbReference type="InterPro" id="IPR023750">
    <property type="entry name" value="RbsD-like_sf"/>
</dbReference>
<dbReference type="InterPro" id="IPR007721">
    <property type="entry name" value="RbsD_FucU"/>
</dbReference>
<dbReference type="NCBIfam" id="NF008761">
    <property type="entry name" value="PRK11797.1"/>
    <property type="match status" value="1"/>
</dbReference>
<dbReference type="PANTHER" id="PTHR37831">
    <property type="entry name" value="D-RIBOSE PYRANASE"/>
    <property type="match status" value="1"/>
</dbReference>
<dbReference type="PANTHER" id="PTHR37831:SF1">
    <property type="entry name" value="D-RIBOSE PYRANASE"/>
    <property type="match status" value="1"/>
</dbReference>
<dbReference type="Pfam" id="PF05025">
    <property type="entry name" value="RbsD_FucU"/>
    <property type="match status" value="1"/>
</dbReference>
<dbReference type="SUPFAM" id="SSF102546">
    <property type="entry name" value="RbsD-like"/>
    <property type="match status" value="1"/>
</dbReference>
<accession>B5QVE8</accession>
<protein>
    <recommendedName>
        <fullName evidence="1">D-ribose pyranase</fullName>
        <ecNumber evidence="1">5.4.99.62</ecNumber>
    </recommendedName>
</protein>
<sequence>MKKGTVLNSEISSVISRLGHTDTLVVCDAGLPIPNSTARIDMALTQGVPSFMQVVDVVTREMQVEAAILATEIKQQNPQLHETLLTHLEQLQQHQGNTIKISYTTHEQFKKLTADSQAVIRSGECSPYANVILCAGVTF</sequence>
<comment type="function">
    <text evidence="1">Catalyzes the interconversion of beta-pyran and beta-furan forms of D-ribose.</text>
</comment>
<comment type="catalytic activity">
    <reaction evidence="1">
        <text>beta-D-ribopyranose = beta-D-ribofuranose</text>
        <dbReference type="Rhea" id="RHEA:25432"/>
        <dbReference type="ChEBI" id="CHEBI:27476"/>
        <dbReference type="ChEBI" id="CHEBI:47002"/>
        <dbReference type="EC" id="5.4.99.62"/>
    </reaction>
</comment>
<comment type="pathway">
    <text evidence="1">Carbohydrate metabolism; D-ribose degradation; D-ribose 5-phosphate from beta-D-ribopyranose: step 1/2.</text>
</comment>
<comment type="subunit">
    <text evidence="1">Homodecamer.</text>
</comment>
<comment type="subcellular location">
    <subcellularLocation>
        <location evidence="1">Cytoplasm</location>
    </subcellularLocation>
</comment>
<comment type="similarity">
    <text evidence="1">Belongs to the RbsD / FucU family. RbsD subfamily.</text>
</comment>
<feature type="chain" id="PRO_1000187160" description="D-ribose pyranase">
    <location>
        <begin position="1"/>
        <end position="139"/>
    </location>
</feature>
<feature type="active site" description="Proton donor" evidence="1">
    <location>
        <position position="20"/>
    </location>
</feature>
<feature type="binding site" evidence="1">
    <location>
        <position position="28"/>
    </location>
    <ligand>
        <name>substrate</name>
    </ligand>
</feature>
<feature type="binding site" evidence="1">
    <location>
        <position position="106"/>
    </location>
    <ligand>
        <name>substrate</name>
    </ligand>
</feature>
<feature type="binding site" evidence="1">
    <location>
        <begin position="128"/>
        <end position="130"/>
    </location>
    <ligand>
        <name>substrate</name>
    </ligand>
</feature>
<gene>
    <name evidence="1" type="primary">rbsD</name>
    <name type="ordered locus">SEN3695</name>
</gene>
<evidence type="ECO:0000255" key="1">
    <source>
        <dbReference type="HAMAP-Rule" id="MF_01661"/>
    </source>
</evidence>
<organism>
    <name type="scientific">Salmonella enteritidis PT4 (strain P125109)</name>
    <dbReference type="NCBI Taxonomy" id="550537"/>
    <lineage>
        <taxon>Bacteria</taxon>
        <taxon>Pseudomonadati</taxon>
        <taxon>Pseudomonadota</taxon>
        <taxon>Gammaproteobacteria</taxon>
        <taxon>Enterobacterales</taxon>
        <taxon>Enterobacteriaceae</taxon>
        <taxon>Salmonella</taxon>
    </lineage>
</organism>
<name>RBSD_SALEP</name>